<sequence length="575" mass="65622">MAAAVPRRPTQQGTVTFEDVAVNFSQEEWCLLSEAQRCLYRDVMLENLALISSLGCWCGSKDEEAPCKQRISVQRESQSRTPRAGVSPKKAHPCEMCGLILEDVFHFADHQETHHKQKLNRSGACGKNLDDTAYLHQHQKQHIGEKFYRKSVREASFVKKRKLRVSQEPFVFREFGKDVLPSSGLCQEEAAVEKTDSETMHGPPFQEGKTNYSCGKRTKAFSTKHSVIPHQKLFTRDGCYVCSDCGKSFSRYVSFSNHQRDHTAKGPYDCGECGKSYSRKSSLIQHQRVHTGQTAYPCEECGKSFSQKGSLISHQLVHTGEGPYECRECGKSFGQKGNLIQHQQGHTGERAYHCGECGKSFRQKFCFINHQRVHTGERPYKCGECGKSFGQKGNLVHHQRGHTGERPYECKECGKSFRYRSHLTEHQRLHTGERPYNCRECGKLFNRKYHLLVHERVHTGERPYACEVCGKLFGNKHSVTIHQRIHTGERPYECSECGKSFLSSSALHVHKRVHSGQKPYKCSECGKSFSECSSLIKHRRIHTGERPYECTKCGKTFQRSSTLLHHQSSHRRKAL</sequence>
<protein>
    <recommendedName>
        <fullName>Zinc finger protein 587</fullName>
    </recommendedName>
</protein>
<gene>
    <name type="primary">ZNF587</name>
</gene>
<name>ZN587_HUMAN</name>
<organism>
    <name type="scientific">Homo sapiens</name>
    <name type="common">Human</name>
    <dbReference type="NCBI Taxonomy" id="9606"/>
    <lineage>
        <taxon>Eukaryota</taxon>
        <taxon>Metazoa</taxon>
        <taxon>Chordata</taxon>
        <taxon>Craniata</taxon>
        <taxon>Vertebrata</taxon>
        <taxon>Euteleostomi</taxon>
        <taxon>Mammalia</taxon>
        <taxon>Eutheria</taxon>
        <taxon>Euarchontoglires</taxon>
        <taxon>Primates</taxon>
        <taxon>Haplorrhini</taxon>
        <taxon>Catarrhini</taxon>
        <taxon>Hominidae</taxon>
        <taxon>Homo</taxon>
    </lineage>
</organism>
<comment type="function">
    <text>May be involved in transcriptional regulation.</text>
</comment>
<comment type="interaction">
    <interactant intactId="EBI-6427977">
        <id>Q96SQ5</id>
    </interactant>
    <interactant intactId="EBI-10173507">
        <id>Q6UY14-3</id>
        <label>ADAMTSL4</label>
    </interactant>
    <organismsDiffer>false</organismsDiffer>
    <experiments>3</experiments>
</comment>
<comment type="interaction">
    <interactant intactId="EBI-6427977">
        <id>Q96SQ5</id>
    </interactant>
    <interactant intactId="EBI-13059134">
        <id>Q13520</id>
        <label>AQP6</label>
    </interactant>
    <organismsDiffer>false</organismsDiffer>
    <experiments>3</experiments>
</comment>
<comment type="interaction">
    <interactant intactId="EBI-6427977">
        <id>Q96SQ5</id>
    </interactant>
    <interactant intactId="EBI-12809012">
        <id>Q8WXK1</id>
        <label>ASB15</label>
    </interactant>
    <organismsDiffer>false</organismsDiffer>
    <experiments>3</experiments>
</comment>
<comment type="interaction">
    <interactant intactId="EBI-6427977">
        <id>Q96SQ5</id>
    </interactant>
    <interactant intactId="EBI-6425205">
        <id>Q9NWX5</id>
        <label>ASB6</label>
    </interactant>
    <organismsDiffer>false</organismsDiffer>
    <experiments>3</experiments>
</comment>
<comment type="interaction">
    <interactant intactId="EBI-6427977">
        <id>Q96SQ5</id>
    </interactant>
    <interactant intactId="EBI-4400025">
        <id>Q9Y2T1</id>
        <label>AXIN2</label>
    </interactant>
    <organismsDiffer>false</organismsDiffer>
    <experiments>3</experiments>
</comment>
<comment type="interaction">
    <interactant intactId="EBI-6427977">
        <id>Q96SQ5</id>
    </interactant>
    <interactant intactId="EBI-742722">
        <id>Q9BUH8</id>
        <label>BEGAIN</label>
    </interactant>
    <organismsDiffer>false</organismsDiffer>
    <experiments>3</experiments>
</comment>
<comment type="interaction">
    <interactant intactId="EBI-6427977">
        <id>Q96SQ5</id>
    </interactant>
    <interactant intactId="EBI-12877892">
        <id>Q8WW18</id>
        <label>C17orf50</label>
    </interactant>
    <organismsDiffer>false</organismsDiffer>
    <experiments>3</experiments>
</comment>
<comment type="interaction">
    <interactant intactId="EBI-6427977">
        <id>Q96SQ5</id>
    </interactant>
    <interactant intactId="EBI-3866279">
        <id>Q9BWT7</id>
        <label>CARD10</label>
    </interactant>
    <organismsDiffer>false</organismsDiffer>
    <experiments>3</experiments>
</comment>
<comment type="interaction">
    <interactant intactId="EBI-6427977">
        <id>Q96SQ5</id>
    </interactant>
    <interactant intactId="EBI-751319">
        <id>Q9H257</id>
        <label>CARD9</label>
    </interactant>
    <organismsDiffer>false</organismsDiffer>
    <experiments>3</experiments>
</comment>
<comment type="interaction">
    <interactant intactId="EBI-6427977">
        <id>Q96SQ5</id>
    </interactant>
    <interactant intactId="EBI-11530605">
        <id>Q9H257-2</id>
        <label>CARD9</label>
    </interactant>
    <organismsDiffer>false</organismsDiffer>
    <experiments>3</experiments>
</comment>
<comment type="interaction">
    <interactant intactId="EBI-6427977">
        <id>Q96SQ5</id>
    </interactant>
    <interactant intactId="EBI-11977221">
        <id>Q86Z20</id>
        <label>CCDC125</label>
    </interactant>
    <organismsDiffer>false</organismsDiffer>
    <experiments>3</experiments>
</comment>
<comment type="interaction">
    <interactant intactId="EBI-6427977">
        <id>Q96SQ5</id>
    </interactant>
    <interactant intactId="EBI-10171416">
        <id>Q96JN2-2</id>
        <label>CCDC136</label>
    </interactant>
    <organismsDiffer>false</organismsDiffer>
    <experiments>3</experiments>
</comment>
<comment type="interaction">
    <interactant intactId="EBI-6427977">
        <id>Q96SQ5</id>
    </interactant>
    <interactant intactId="EBI-739674">
        <id>Q15834</id>
        <label>CCDC85B</label>
    </interactant>
    <organismsDiffer>false</organismsDiffer>
    <experiments>3</experiments>
</comment>
<comment type="interaction">
    <interactant intactId="EBI-6427977">
        <id>Q96SQ5</id>
    </interactant>
    <interactant intactId="EBI-744115">
        <id>Q9C0F1</id>
        <label>CEP44</label>
    </interactant>
    <organismsDiffer>false</organismsDiffer>
    <experiments>6</experiments>
</comment>
<comment type="interaction">
    <interactant intactId="EBI-6427977">
        <id>Q96SQ5</id>
    </interactant>
    <interactant intactId="EBI-739624">
        <id>Q8NHQ1</id>
        <label>CEP70</label>
    </interactant>
    <organismsDiffer>false</organismsDiffer>
    <experiments>6</experiments>
</comment>
<comment type="interaction">
    <interactant intactId="EBI-6427977">
        <id>Q96SQ5</id>
    </interactant>
    <interactant intactId="EBI-12593838">
        <id>Q6WN34-2</id>
        <label>CHRDL2</label>
    </interactant>
    <organismsDiffer>false</organismsDiffer>
    <experiments>3</experiments>
</comment>
<comment type="interaction">
    <interactant intactId="EBI-6427977">
        <id>Q96SQ5</id>
    </interactant>
    <interactant intactId="EBI-4311573">
        <id>Q96S65</id>
        <label>CSRNP1</label>
    </interactant>
    <organismsDiffer>false</organismsDiffer>
    <experiments>3</experiments>
</comment>
<comment type="interaction">
    <interactant intactId="EBI-6427977">
        <id>Q96SQ5</id>
    </interactant>
    <interactant intactId="EBI-3867333">
        <id>A8MQ03</id>
        <label>CYSRT1</label>
    </interactant>
    <organismsDiffer>false</organismsDiffer>
    <experiments>3</experiments>
</comment>
<comment type="interaction">
    <interactant intactId="EBI-6427977">
        <id>Q96SQ5</id>
    </interactant>
    <interactant intactId="EBI-12346463">
        <id>Q6ZN54-2</id>
        <label>DEF8</label>
    </interactant>
    <organismsDiffer>false</organismsDiffer>
    <experiments>3</experiments>
</comment>
<comment type="interaction">
    <interactant intactId="EBI-6427977">
        <id>Q96SQ5</id>
    </interactant>
    <interactant intactId="EBI-1051531">
        <id>Q6P158</id>
        <label>DHX57</label>
    </interactant>
    <organismsDiffer>false</organismsDiffer>
    <experiments>3</experiments>
</comment>
<comment type="interaction">
    <interactant intactId="EBI-6427977">
        <id>Q96SQ5</id>
    </interactant>
    <interactant intactId="EBI-743414">
        <id>O95967</id>
        <label>EFEMP2</label>
    </interactant>
    <organismsDiffer>false</organismsDiffer>
    <experiments>3</experiments>
</comment>
<comment type="interaction">
    <interactant intactId="EBI-6427977">
        <id>Q96SQ5</id>
    </interactant>
    <interactant intactId="EBI-11958845">
        <id>O94868-3</id>
        <label>FCHSD2</label>
    </interactant>
    <organismsDiffer>false</organismsDiffer>
    <experiments>3</experiments>
</comment>
<comment type="interaction">
    <interactant intactId="EBI-6427977">
        <id>Q96SQ5</id>
    </interactant>
    <interactant intactId="EBI-741101">
        <id>Q13643</id>
        <label>FHL3</label>
    </interactant>
    <organismsDiffer>false</organismsDiffer>
    <experiments>3</experiments>
</comment>
<comment type="interaction">
    <interactant intactId="EBI-6427977">
        <id>Q96SQ5</id>
    </interactant>
    <interactant intactId="EBI-750641">
        <id>Q5TD97</id>
        <label>FHL5</label>
    </interactant>
    <organismsDiffer>false</organismsDiffer>
    <experiments>3</experiments>
</comment>
<comment type="interaction">
    <interactant intactId="EBI-6427977">
        <id>Q96SQ5</id>
    </interactant>
    <interactant intactId="EBI-5661036">
        <id>A1L4K1</id>
        <label>FSD2</label>
    </interactant>
    <organismsDiffer>false</organismsDiffer>
    <experiments>6</experiments>
</comment>
<comment type="interaction">
    <interactant intactId="EBI-6427977">
        <id>Q96SQ5</id>
    </interactant>
    <interactant intactId="EBI-1571188">
        <id>P19883</id>
        <label>FST</label>
    </interactant>
    <organismsDiffer>false</organismsDiffer>
    <experiments>3</experiments>
</comment>
<comment type="interaction">
    <interactant intactId="EBI-6427977">
        <id>Q96SQ5</id>
    </interactant>
    <interactant intactId="EBI-618309">
        <id>Q08379</id>
        <label>GOLGA2</label>
    </interactant>
    <organismsDiffer>false</organismsDiffer>
    <experiments>3</experiments>
</comment>
<comment type="interaction">
    <interactant intactId="EBI-6427977">
        <id>Q96SQ5</id>
    </interactant>
    <interactant intactId="EBI-5916454">
        <id>A6NEM1</id>
        <label>GOLGA6L9</label>
    </interactant>
    <organismsDiffer>false</organismsDiffer>
    <experiments>3</experiments>
</comment>
<comment type="interaction">
    <interactant intactId="EBI-6427977">
        <id>Q96SQ5</id>
    </interactant>
    <interactant intactId="EBI-349832">
        <id>Q9HD26</id>
        <label>GOPC</label>
    </interactant>
    <organismsDiffer>false</organismsDiffer>
    <experiments>3</experiments>
</comment>
<comment type="interaction">
    <interactant intactId="EBI-6427977">
        <id>Q96SQ5</id>
    </interactant>
    <interactant intactId="EBI-19954058">
        <id>O15499</id>
        <label>GSC2</label>
    </interactant>
    <organismsDiffer>false</organismsDiffer>
    <experiments>3</experiments>
</comment>
<comment type="interaction">
    <interactant intactId="EBI-6427977">
        <id>Q96SQ5</id>
    </interactant>
    <interactant intactId="EBI-2549423">
        <id>Q6NT76</id>
        <label>HMBOX1</label>
    </interactant>
    <organismsDiffer>false</organismsDiffer>
    <experiments>3</experiments>
</comment>
<comment type="interaction">
    <interactant intactId="EBI-6427977">
        <id>Q96SQ5</id>
    </interactant>
    <interactant intactId="EBI-10961706">
        <id>Q96ED9-2</id>
        <label>HOOK2</label>
    </interactant>
    <organismsDiffer>false</organismsDiffer>
    <experiments>3</experiments>
</comment>
<comment type="interaction">
    <interactant intactId="EBI-6427977">
        <id>Q96SQ5</id>
    </interactant>
    <interactant intactId="EBI-740785">
        <id>P49639</id>
        <label>HOXA1</label>
    </interactant>
    <organismsDiffer>false</organismsDiffer>
    <experiments>5</experiments>
</comment>
<comment type="interaction">
    <interactant intactId="EBI-6427977">
        <id>Q96SQ5</id>
    </interactant>
    <interactant intactId="EBI-7116203">
        <id>O75031</id>
        <label>HSF2BP</label>
    </interactant>
    <organismsDiffer>false</organismsDiffer>
    <experiments>3</experiments>
</comment>
<comment type="interaction">
    <interactant intactId="EBI-6427977">
        <id>Q96SQ5</id>
    </interactant>
    <interactant intactId="EBI-947015">
        <id>P24592</id>
        <label>IGFBP6</label>
    </interactant>
    <organismsDiffer>false</organismsDiffer>
    <experiments>3</experiments>
</comment>
<comment type="interaction">
    <interactant intactId="EBI-6427977">
        <id>Q96SQ5</id>
    </interactant>
    <interactant intactId="EBI-81279">
        <id>Q9Y6K9</id>
        <label>IKBKG</label>
    </interactant>
    <organismsDiffer>false</organismsDiffer>
    <experiments>3</experiments>
</comment>
<comment type="interaction">
    <interactant intactId="EBI-6427977">
        <id>Q96SQ5</id>
    </interactant>
    <interactant intactId="EBI-11522367">
        <id>Q13422-7</id>
        <label>IKZF1</label>
    </interactant>
    <organismsDiffer>false</organismsDiffer>
    <experiments>3</experiments>
</comment>
<comment type="interaction">
    <interactant intactId="EBI-6427977">
        <id>Q96SQ5</id>
    </interactant>
    <interactant intactId="EBI-747204">
        <id>Q9UKT9</id>
        <label>IKZF3</label>
    </interactant>
    <organismsDiffer>false</organismsDiffer>
    <experiments>3</experiments>
</comment>
<comment type="interaction">
    <interactant intactId="EBI-6427977">
        <id>Q96SQ5</id>
    </interactant>
    <interactant intactId="EBI-12081118">
        <id>Q1MX18</id>
        <label>INSC</label>
    </interactant>
    <organismsDiffer>false</organismsDiffer>
    <experiments>3</experiments>
</comment>
<comment type="interaction">
    <interactant intactId="EBI-6427977">
        <id>Q96SQ5</id>
    </interactant>
    <interactant intactId="EBI-18398632">
        <id>Q9ULR0-1</id>
        <label>ISY1</label>
    </interactant>
    <organismsDiffer>false</organismsDiffer>
    <experiments>3</experiments>
</comment>
<comment type="interaction">
    <interactant intactId="EBI-6427977">
        <id>Q96SQ5</id>
    </interactant>
    <interactant intactId="EBI-715394">
        <id>Q9H079</id>
        <label>KATNBL1</label>
    </interactant>
    <organismsDiffer>false</organismsDiffer>
    <experiments>3</experiments>
</comment>
<comment type="interaction">
    <interactant intactId="EBI-6427977">
        <id>Q96SQ5</id>
    </interactant>
    <interactant intactId="EBI-11954971">
        <id>Q96MP8-2</id>
        <label>KCTD7</label>
    </interactant>
    <organismsDiffer>false</organismsDiffer>
    <experiments>3</experiments>
</comment>
<comment type="interaction">
    <interactant intactId="EBI-6427977">
        <id>Q96SQ5</id>
    </interactant>
    <interactant intactId="EBI-10981970">
        <id>Q5T749</id>
        <label>KPRP</label>
    </interactant>
    <organismsDiffer>false</organismsDiffer>
    <experiments>3</experiments>
</comment>
<comment type="interaction">
    <interactant intactId="EBI-6427977">
        <id>Q96SQ5</id>
    </interactant>
    <interactant intactId="EBI-948001">
        <id>Q15323</id>
        <label>KRT31</label>
    </interactant>
    <organismsDiffer>false</organismsDiffer>
    <experiments>3</experiments>
</comment>
<comment type="interaction">
    <interactant intactId="EBI-6427977">
        <id>Q96SQ5</id>
    </interactant>
    <interactant intactId="EBI-1047263">
        <id>O76015</id>
        <label>KRT38</label>
    </interactant>
    <organismsDiffer>false</organismsDiffer>
    <experiments>3</experiments>
</comment>
<comment type="interaction">
    <interactant intactId="EBI-6427977">
        <id>Q96SQ5</id>
    </interactant>
    <interactant intactId="EBI-10171697">
        <id>Q6A162</id>
        <label>KRT40</label>
    </interactant>
    <organismsDiffer>false</organismsDiffer>
    <experiments>6</experiments>
</comment>
<comment type="interaction">
    <interactant intactId="EBI-6427977">
        <id>Q96SQ5</id>
    </interactant>
    <interactant intactId="EBI-11959885">
        <id>Q07627</id>
        <label>KRTAP1-1</label>
    </interactant>
    <organismsDiffer>false</organismsDiffer>
    <experiments>3</experiments>
</comment>
<comment type="interaction">
    <interactant intactId="EBI-6427977">
        <id>Q96SQ5</id>
    </interactant>
    <interactant intactId="EBI-11749135">
        <id>Q8IUG1</id>
        <label>KRTAP1-3</label>
    </interactant>
    <organismsDiffer>false</organismsDiffer>
    <experiments>3</experiments>
</comment>
<comment type="interaction">
    <interactant intactId="EBI-6427977">
        <id>Q96SQ5</id>
    </interactant>
    <interactant intactId="EBI-11955579">
        <id>P60014</id>
        <label>KRTAP10-10</label>
    </interactant>
    <organismsDiffer>false</organismsDiffer>
    <experiments>3</experiments>
</comment>
<comment type="interaction">
    <interactant intactId="EBI-6427977">
        <id>Q96SQ5</id>
    </interactant>
    <interactant intactId="EBI-10217483">
        <id>P60412</id>
        <label>KRTAP10-11</label>
    </interactant>
    <organismsDiffer>false</organismsDiffer>
    <experiments>3</experiments>
</comment>
<comment type="interaction">
    <interactant intactId="EBI-6427977">
        <id>Q96SQ5</id>
    </interactant>
    <interactant intactId="EBI-10172150">
        <id>P60370</id>
        <label>KRTAP10-5</label>
    </interactant>
    <organismsDiffer>false</organismsDiffer>
    <experiments>6</experiments>
</comment>
<comment type="interaction">
    <interactant intactId="EBI-6427977">
        <id>Q96SQ5</id>
    </interactant>
    <interactant intactId="EBI-10172290">
        <id>P60409</id>
        <label>KRTAP10-7</label>
    </interactant>
    <organismsDiffer>false</organismsDiffer>
    <experiments>6</experiments>
</comment>
<comment type="interaction">
    <interactant intactId="EBI-6427977">
        <id>Q96SQ5</id>
    </interactant>
    <interactant intactId="EBI-10171774">
        <id>P60410</id>
        <label>KRTAP10-8</label>
    </interactant>
    <organismsDiffer>false</organismsDiffer>
    <experiments>6</experiments>
</comment>
<comment type="interaction">
    <interactant intactId="EBI-6427977">
        <id>Q96SQ5</id>
    </interactant>
    <interactant intactId="EBI-10172052">
        <id>P60411</id>
        <label>KRTAP10-9</label>
    </interactant>
    <organismsDiffer>false</organismsDiffer>
    <experiments>6</experiments>
</comment>
<comment type="interaction">
    <interactant intactId="EBI-6427977">
        <id>Q96SQ5</id>
    </interactant>
    <interactant intactId="EBI-10176379">
        <id>P59991</id>
        <label>KRTAP12-2</label>
    </interactant>
    <organismsDiffer>false</organismsDiffer>
    <experiments>3</experiments>
</comment>
<comment type="interaction">
    <interactant intactId="EBI-6427977">
        <id>Q96SQ5</id>
    </interactant>
    <interactant intactId="EBI-11953334">
        <id>P60328</id>
        <label>KRTAP12-3</label>
    </interactant>
    <organismsDiffer>false</organismsDiffer>
    <experiments>3</experiments>
</comment>
<comment type="interaction">
    <interactant intactId="EBI-6427977">
        <id>Q96SQ5</id>
    </interactant>
    <interactant intactId="EBI-10196781">
        <id>P0C7H8</id>
        <label>KRTAP2-3</label>
    </interactant>
    <organismsDiffer>false</organismsDiffer>
    <experiments>3</experiments>
</comment>
<comment type="interaction">
    <interactant intactId="EBI-6427977">
        <id>Q96SQ5</id>
    </interactant>
    <interactant intactId="EBI-14065470">
        <id>Q9BYR9</id>
        <label>KRTAP2-4</label>
    </interactant>
    <organismsDiffer>false</organismsDiffer>
    <experiments>3</experiments>
</comment>
<comment type="interaction">
    <interactant intactId="EBI-6427977">
        <id>Q96SQ5</id>
    </interactant>
    <interactant intactId="EBI-11987425">
        <id>Q6L8G8</id>
        <label>KRTAP5-7</label>
    </interactant>
    <organismsDiffer>false</organismsDiffer>
    <experiments>3</experiments>
</comment>
<comment type="interaction">
    <interactant intactId="EBI-6427977">
        <id>Q96SQ5</id>
    </interactant>
    <interactant intactId="EBI-3958099">
        <id>P26371</id>
        <label>KRTAP5-9</label>
    </interactant>
    <organismsDiffer>false</organismsDiffer>
    <experiments>6</experiments>
</comment>
<comment type="interaction">
    <interactant intactId="EBI-6427977">
        <id>Q96SQ5</id>
    </interactant>
    <interactant intactId="EBI-740738">
        <id>O95751</id>
        <label>LDOC1</label>
    </interactant>
    <organismsDiffer>false</organismsDiffer>
    <experiments>3</experiments>
</comment>
<comment type="interaction">
    <interactant intactId="EBI-6427977">
        <id>Q96SQ5</id>
    </interactant>
    <interactant intactId="EBI-12039345">
        <id>Q9UBR4-2</id>
        <label>LHX3</label>
    </interactant>
    <organismsDiffer>false</organismsDiffer>
    <experiments>3</experiments>
</comment>
<comment type="interaction">
    <interactant intactId="EBI-6427977">
        <id>Q96SQ5</id>
    </interactant>
    <interactant intactId="EBI-12864460">
        <id>P48059-3</id>
        <label>LIMS1</label>
    </interactant>
    <organismsDiffer>false</organismsDiffer>
    <experiments>3</experiments>
</comment>
<comment type="interaction">
    <interactant intactId="EBI-6427977">
        <id>Q96SQ5</id>
    </interactant>
    <interactant intactId="EBI-11742507">
        <id>Q8TAP4-4</id>
        <label>LMO3</label>
    </interactant>
    <organismsDiffer>false</organismsDiffer>
    <experiments>3</experiments>
</comment>
<comment type="interaction">
    <interactant intactId="EBI-6427977">
        <id>Q96SQ5</id>
    </interactant>
    <interactant intactId="EBI-18273118">
        <id>Q9P2M1</id>
        <label>LRP2BP</label>
    </interactant>
    <organismsDiffer>false</organismsDiffer>
    <experiments>3</experiments>
</comment>
<comment type="interaction">
    <interactant intactId="EBI-6427977">
        <id>Q96SQ5</id>
    </interactant>
    <interactant intactId="EBI-1216080">
        <id>Q9Y250</id>
        <label>LZTS1</label>
    </interactant>
    <organismsDiffer>false</organismsDiffer>
    <experiments>3</experiments>
</comment>
<comment type="interaction">
    <interactant intactId="EBI-6427977">
        <id>Q96SQ5</id>
    </interactant>
    <interactant intactId="EBI-11987923">
        <id>P59942</id>
        <label>MCCD1</label>
    </interactant>
    <organismsDiffer>false</organismsDiffer>
    <experiments>3</experiments>
</comment>
<comment type="interaction">
    <interactant intactId="EBI-6427977">
        <id>Q96SQ5</id>
    </interactant>
    <interactant intactId="EBI-724076">
        <id>Q99750</id>
        <label>MDFI</label>
    </interactant>
    <organismsDiffer>false</organismsDiffer>
    <experiments>8</experiments>
</comment>
<comment type="interaction">
    <interactant intactId="EBI-6427977">
        <id>Q96SQ5</id>
    </interactant>
    <interactant intactId="EBI-748397">
        <id>P50222</id>
        <label>MEOX2</label>
    </interactant>
    <organismsDiffer>false</organismsDiffer>
    <experiments>3</experiments>
</comment>
<comment type="interaction">
    <interactant intactId="EBI-6427977">
        <id>Q96SQ5</id>
    </interactant>
    <interactant intactId="EBI-16439278">
        <id>Q6FHY5</id>
        <label>MEOX2</label>
    </interactant>
    <organismsDiffer>false</organismsDiffer>
    <experiments>3</experiments>
</comment>
<comment type="interaction">
    <interactant intactId="EBI-6427977">
        <id>Q96SQ5</id>
    </interactant>
    <interactant intactId="EBI-10172526">
        <id>Q9UJV3-2</id>
        <label>MID2</label>
    </interactant>
    <organismsDiffer>false</organismsDiffer>
    <experiments>6</experiments>
</comment>
<comment type="interaction">
    <interactant intactId="EBI-6427977">
        <id>Q96SQ5</id>
    </interactant>
    <interactant intactId="EBI-2340269">
        <id>Q13064</id>
        <label>MKRN3</label>
    </interactant>
    <organismsDiffer>false</organismsDiffer>
    <experiments>3</experiments>
</comment>
<comment type="interaction">
    <interactant intactId="EBI-6427977">
        <id>Q96SQ5</id>
    </interactant>
    <interactant intactId="EBI-742948">
        <id>Q5JR59</id>
        <label>MTUS2</label>
    </interactant>
    <organismsDiffer>false</organismsDiffer>
    <experiments>3</experiments>
</comment>
<comment type="interaction">
    <interactant intactId="EBI-6427977">
        <id>Q96SQ5</id>
    </interactant>
    <interactant intactId="EBI-11522433">
        <id>Q5JR59-3</id>
        <label>MTUS2</label>
    </interactant>
    <organismsDiffer>false</organismsDiffer>
    <experiments>5</experiments>
</comment>
<comment type="interaction">
    <interactant intactId="EBI-6427977">
        <id>Q96SQ5</id>
    </interactant>
    <interactant intactId="EBI-17491620">
        <id>P13349</id>
        <label>MYF5</label>
    </interactant>
    <organismsDiffer>false</organismsDiffer>
    <experiments>5</experiments>
</comment>
<comment type="interaction">
    <interactant intactId="EBI-6427977">
        <id>Q96SQ5</id>
    </interactant>
    <interactant intactId="EBI-1246238">
        <id>P17568</id>
        <label>NDUFB7</label>
    </interactant>
    <organismsDiffer>false</organismsDiffer>
    <experiments>3</experiments>
</comment>
<comment type="interaction">
    <interactant intactId="EBI-6427977">
        <id>Q96SQ5</id>
    </interactant>
    <interactant intactId="EBI-11750983">
        <id>Q9HC98-4</id>
        <label>NEK6</label>
    </interactant>
    <organismsDiffer>false</organismsDiffer>
    <experiments>3</experiments>
</comment>
<comment type="interaction">
    <interactant intactId="EBI-6427977">
        <id>Q96SQ5</id>
    </interactant>
    <interactant intactId="EBI-11423380">
        <id>Q5M9Q1</id>
        <label>NKAPL</label>
    </interactant>
    <organismsDiffer>false</organismsDiffer>
    <experiments>3</experiments>
</comment>
<comment type="interaction">
    <interactant intactId="EBI-6427977">
        <id>Q96SQ5</id>
    </interactant>
    <interactant intactId="EBI-945833">
        <id>Q7Z3S9</id>
        <label>NOTCH2NLA</label>
    </interactant>
    <organismsDiffer>false</organismsDiffer>
    <experiments>3</experiments>
</comment>
<comment type="interaction">
    <interactant intactId="EBI-6427977">
        <id>Q96SQ5</id>
    </interactant>
    <interactant intactId="EBI-22310682">
        <id>P0DPK4</id>
        <label>NOTCH2NLC</label>
    </interactant>
    <organismsDiffer>false</organismsDiffer>
    <experiments>3</experiments>
</comment>
<comment type="interaction">
    <interactant intactId="EBI-6427977">
        <id>Q96SQ5</id>
    </interactant>
    <interactant intactId="EBI-10250949">
        <id>Q6NSM0</id>
        <label>NR1D2</label>
    </interactant>
    <organismsDiffer>false</organismsDiffer>
    <experiments>3</experiments>
</comment>
<comment type="interaction">
    <interactant intactId="EBI-6427977">
        <id>Q96SQ5</id>
    </interactant>
    <interactant intactId="EBI-348489">
        <id>P40425</id>
        <label>PBX2</label>
    </interactant>
    <organismsDiffer>false</organismsDiffer>
    <experiments>3</experiments>
</comment>
<comment type="interaction">
    <interactant intactId="EBI-6427977">
        <id>Q96SQ5</id>
    </interactant>
    <interactant intactId="EBI-9640281">
        <id>Q5VU43-2</id>
        <label>PDE4DIP</label>
    </interactant>
    <organismsDiffer>false</organismsDiffer>
    <experiments>3</experiments>
</comment>
<comment type="interaction">
    <interactant intactId="EBI-6427977">
        <id>Q96SQ5</id>
    </interactant>
    <interactant intactId="EBI-740019">
        <id>O15162</id>
        <label>PLSCR1</label>
    </interactant>
    <organismsDiffer>false</organismsDiffer>
    <experiments>3</experiments>
</comment>
<comment type="interaction">
    <interactant intactId="EBI-6427977">
        <id>Q96SQ5</id>
    </interactant>
    <interactant intactId="EBI-302355">
        <id>Q9UL42</id>
        <label>PNMA2</label>
    </interactant>
    <organismsDiffer>false</organismsDiffer>
    <experiments>6</experiments>
</comment>
<comment type="interaction">
    <interactant intactId="EBI-6427977">
        <id>Q96SQ5</id>
    </interactant>
    <interactant intactId="EBI-3957793">
        <id>Q9GZV8</id>
        <label>PRDM14</label>
    </interactant>
    <organismsDiffer>false</organismsDiffer>
    <experiments>3</experiments>
</comment>
<comment type="interaction">
    <interactant intactId="EBI-6427977">
        <id>Q96SQ5</id>
    </interactant>
    <interactant intactId="EBI-1567797">
        <id>Q8WWY3</id>
        <label>PRPF31</label>
    </interactant>
    <organismsDiffer>false</organismsDiffer>
    <experiments>6</experiments>
</comment>
<comment type="interaction">
    <interactant intactId="EBI-6427977">
        <id>Q96SQ5</id>
    </interactant>
    <interactant intactId="EBI-18560266">
        <id>Q92753-1</id>
        <label>RORB</label>
    </interactant>
    <organismsDiffer>false</organismsDiffer>
    <experiments>3</experiments>
</comment>
<comment type="interaction">
    <interactant intactId="EBI-6427977">
        <id>Q96SQ5</id>
    </interactant>
    <interactant intactId="EBI-747225">
        <id>Q59EK9</id>
        <label>RUNDC3A</label>
    </interactant>
    <organismsDiffer>false</organismsDiffer>
    <experiments>3</experiments>
</comment>
<comment type="interaction">
    <interactant intactId="EBI-6427977">
        <id>Q96SQ5</id>
    </interactant>
    <interactant intactId="EBI-11957366">
        <id>Q59EK9-3</id>
        <label>RUNDC3A</label>
    </interactant>
    <organismsDiffer>false</organismsDiffer>
    <experiments>3</experiments>
</comment>
<comment type="interaction">
    <interactant intactId="EBI-6427977">
        <id>Q96SQ5</id>
    </interactant>
    <interactant intactId="EBI-11057552">
        <id>Q6GMV2</id>
        <label>SMYD5</label>
    </interactant>
    <organismsDiffer>false</organismsDiffer>
    <experiments>3</experiments>
</comment>
<comment type="interaction">
    <interactant intactId="EBI-6427977">
        <id>Q96SQ5</id>
    </interactant>
    <interactant intactId="EBI-3928516">
        <id>Q9UN79</id>
        <label>SOX13</label>
    </interactant>
    <organismsDiffer>false</organismsDiffer>
    <experiments>3</experiments>
</comment>
<comment type="interaction">
    <interactant intactId="EBI-6427977">
        <id>Q96SQ5</id>
    </interactant>
    <interactant intactId="EBI-5235340">
        <id>Q7Z699</id>
        <label>SPRED1</label>
    </interactant>
    <organismsDiffer>false</organismsDiffer>
    <experiments>3</experiments>
</comment>
<comment type="interaction">
    <interactant intactId="EBI-6427977">
        <id>Q96SQ5</id>
    </interactant>
    <interactant intactId="EBI-742487">
        <id>O43597</id>
        <label>SPRY2</label>
    </interactant>
    <organismsDiffer>false</organismsDiffer>
    <experiments>3</experiments>
</comment>
<comment type="interaction">
    <interactant intactId="EBI-6427977">
        <id>Q96SQ5</id>
    </interactant>
    <interactant intactId="EBI-12290641">
        <id>O43610</id>
        <label>SPRY3</label>
    </interactant>
    <organismsDiffer>false</organismsDiffer>
    <experiments>3</experiments>
</comment>
<comment type="interaction">
    <interactant intactId="EBI-6427977">
        <id>Q96SQ5</id>
    </interactant>
    <interactant intactId="EBI-2212028">
        <id>Q9Y2D8</id>
        <label>SSX2IP</label>
    </interactant>
    <organismsDiffer>false</organismsDiffer>
    <experiments>3</experiments>
</comment>
<comment type="interaction">
    <interactant intactId="EBI-6427977">
        <id>Q96SQ5</id>
    </interactant>
    <interactant intactId="EBI-714135">
        <id>O75558</id>
        <label>STX11</label>
    </interactant>
    <organismsDiffer>false</organismsDiffer>
    <experiments>8</experiments>
</comment>
<comment type="interaction">
    <interactant intactId="EBI-6427977">
        <id>Q96SQ5</id>
    </interactant>
    <interactant intactId="EBI-533224">
        <id>P15884</id>
        <label>TCF4</label>
    </interactant>
    <organismsDiffer>false</organismsDiffer>
    <experiments>3</experiments>
</comment>
<comment type="interaction">
    <interactant intactId="EBI-6427977">
        <id>Q96SQ5</id>
    </interactant>
    <interactant intactId="EBI-13636688">
        <id>P15884-3</id>
        <label>TCF4</label>
    </interactant>
    <organismsDiffer>false</organismsDiffer>
    <experiments>3</experiments>
</comment>
<comment type="interaction">
    <interactant intactId="EBI-6427977">
        <id>Q96SQ5</id>
    </interactant>
    <interactant intactId="EBI-12827077">
        <id>Q6N022</id>
        <label>TENM4</label>
    </interactant>
    <organismsDiffer>false</organismsDiffer>
    <experiments>3</experiments>
</comment>
<comment type="interaction">
    <interactant intactId="EBI-6427977">
        <id>Q96SQ5</id>
    </interactant>
    <interactant intactId="EBI-1105213">
        <id>Q9UBB9</id>
        <label>TFIP11</label>
    </interactant>
    <organismsDiffer>false</organismsDiffer>
    <experiments>3</experiments>
</comment>
<comment type="interaction">
    <interactant intactId="EBI-6427977">
        <id>Q96SQ5</id>
    </interactant>
    <interactant intactId="EBI-949753">
        <id>Q63HR2</id>
        <label>TNS2</label>
    </interactant>
    <organismsDiffer>false</organismsDiffer>
    <experiments>6</experiments>
</comment>
<comment type="interaction">
    <interactant intactId="EBI-6427977">
        <id>Q96SQ5</id>
    </interactant>
    <interactant intactId="EBI-359224">
        <id>Q13077</id>
        <label>TRAF1</label>
    </interactant>
    <organismsDiffer>false</organismsDiffer>
    <experiments>6</experiments>
</comment>
<comment type="interaction">
    <interactant intactId="EBI-6427977">
        <id>Q96SQ5</id>
    </interactant>
    <interactant intactId="EBI-492476">
        <id>Q96RU7</id>
        <label>TRIB3</label>
    </interactant>
    <organismsDiffer>false</organismsDiffer>
    <experiments>3</experiments>
</comment>
<comment type="interaction">
    <interactant intactId="EBI-6427977">
        <id>Q96SQ5</id>
    </interactant>
    <interactant intactId="EBI-740098">
        <id>P36406</id>
        <label>TRIM23</label>
    </interactant>
    <organismsDiffer>false</organismsDiffer>
    <experiments>3</experiments>
</comment>
<comment type="interaction">
    <interactant intactId="EBI-6427977">
        <id>Q96SQ5</id>
    </interactant>
    <interactant intactId="EBI-719493">
        <id>P14373</id>
        <label>TRIM27</label>
    </interactant>
    <organismsDiffer>false</organismsDiffer>
    <experiments>3</experiments>
</comment>
<comment type="interaction">
    <interactant intactId="EBI-6427977">
        <id>Q96SQ5</id>
    </interactant>
    <interactant intactId="EBI-2341518">
        <id>Q9NQ86</id>
        <label>TRIM36</label>
    </interactant>
    <organismsDiffer>false</organismsDiffer>
    <experiments>3</experiments>
</comment>
<comment type="interaction">
    <interactant intactId="EBI-6427977">
        <id>Q96SQ5</id>
    </interactant>
    <interactant intactId="EBI-741602">
        <id>O94972</id>
        <label>TRIM37</label>
    </interactant>
    <organismsDiffer>false</organismsDiffer>
    <experiments>3</experiments>
</comment>
<comment type="interaction">
    <interactant intactId="EBI-6427977">
        <id>Q96SQ5</id>
    </interactant>
    <interactant intactId="EBI-725997">
        <id>Q8WV44</id>
        <label>TRIM41</label>
    </interactant>
    <organismsDiffer>false</organismsDiffer>
    <experiments>6</experiments>
</comment>
<comment type="interaction">
    <interactant intactId="EBI-6427977">
        <id>Q96SQ5</id>
    </interactant>
    <interactant intactId="EBI-2130429">
        <id>Q9BYV2</id>
        <label>TRIM54</label>
    </interactant>
    <organismsDiffer>false</organismsDiffer>
    <experiments>6</experiments>
</comment>
<comment type="interaction">
    <interactant intactId="EBI-6427977">
        <id>Q96SQ5</id>
    </interactant>
    <interactant intactId="EBI-12806590">
        <id>Q86WV8</id>
        <label>TSC1</label>
    </interactant>
    <organismsDiffer>false</organismsDiffer>
    <experiments>3</experiments>
</comment>
<comment type="interaction">
    <interactant intactId="EBI-6427977">
        <id>Q96SQ5</id>
    </interactant>
    <interactant intactId="EBI-744794">
        <id>Q9BZW7</id>
        <label>TSGA10</label>
    </interactant>
    <organismsDiffer>false</organismsDiffer>
    <experiments>3</experiments>
</comment>
<comment type="interaction">
    <interactant intactId="EBI-6427977">
        <id>Q96SQ5</id>
    </interactant>
    <interactant intactId="EBI-7877438">
        <id>P42681</id>
        <label>TXK</label>
    </interactant>
    <organismsDiffer>false</organismsDiffer>
    <experiments>3</experiments>
</comment>
<comment type="interaction">
    <interactant intactId="EBI-6427977">
        <id>Q96SQ5</id>
    </interactant>
    <interactant intactId="EBI-2799833">
        <id>Q8N1B4</id>
        <label>VPS52</label>
    </interactant>
    <organismsDiffer>false</organismsDiffer>
    <experiments>3</experiments>
</comment>
<comment type="interaction">
    <interactant intactId="EBI-6427977">
        <id>Q96SQ5</id>
    </interactant>
    <interactant intactId="EBI-11957238">
        <id>Q2TAL6</id>
        <label>VWC2</label>
    </interactant>
    <organismsDiffer>false</organismsDiffer>
    <experiments>3</experiments>
</comment>
<comment type="interaction">
    <interactant intactId="EBI-6427977">
        <id>Q96SQ5</id>
    </interactant>
    <interactant intactId="EBI-740718">
        <id>O43298</id>
        <label>ZBTB43</label>
    </interactant>
    <organismsDiffer>false</organismsDiffer>
    <experiments>3</experiments>
</comment>
<comment type="interaction">
    <interactant intactId="EBI-6427977">
        <id>Q96SQ5</id>
    </interactant>
    <interactant intactId="EBI-742740">
        <id>Q96BR9</id>
        <label>ZBTB8A</label>
    </interactant>
    <organismsDiffer>false</organismsDiffer>
    <experiments>6</experiments>
</comment>
<comment type="interaction">
    <interactant intactId="EBI-6427977">
        <id>Q96SQ5</id>
    </interactant>
    <interactant intactId="EBI-10183064">
        <id>Q8N5A5-2</id>
        <label>ZGPAT</label>
    </interactant>
    <organismsDiffer>false</organismsDiffer>
    <experiments>3</experiments>
</comment>
<comment type="interaction">
    <interactant intactId="EBI-6427977">
        <id>Q96SQ5</id>
    </interactant>
    <interactant intactId="EBI-11962760">
        <id>Q9NZV7</id>
        <label>ZIM2</label>
    </interactant>
    <organismsDiffer>false</organismsDiffer>
    <experiments>3</experiments>
</comment>
<comment type="interaction">
    <interactant intactId="EBI-6427977">
        <id>Q96SQ5</id>
    </interactant>
    <interactant intactId="EBI-2602314">
        <id>Q15776</id>
        <label>ZKSCAN8</label>
    </interactant>
    <organismsDiffer>false</organismsDiffer>
    <experiments>3</experiments>
</comment>
<comment type="interaction">
    <interactant intactId="EBI-6427977">
        <id>Q96SQ5</id>
    </interactant>
    <interactant intactId="EBI-10754950">
        <id>Q9HBT8</id>
        <label>ZNF286A</label>
    </interactant>
    <organismsDiffer>false</organismsDiffer>
    <experiments>3</experiments>
</comment>
<comment type="interaction">
    <interactant intactId="EBI-6427977">
        <id>Q96SQ5</id>
    </interactant>
    <interactant intactId="EBI-373456">
        <id>Q9Y3S2</id>
        <label>ZNF330</label>
    </interactant>
    <organismsDiffer>false</organismsDiffer>
    <experiments>3</experiments>
</comment>
<comment type="interaction">
    <interactant intactId="EBI-6427977">
        <id>Q96SQ5</id>
    </interactant>
    <interactant intactId="EBI-740727">
        <id>Q8TAU3</id>
        <label>ZNF417</label>
    </interactant>
    <organismsDiffer>false</organismsDiffer>
    <experiments>3</experiments>
</comment>
<comment type="interaction">
    <interactant intactId="EBI-6427977">
        <id>Q96SQ5</id>
    </interactant>
    <interactant intactId="EBI-12895421">
        <id>Q8IVP9</id>
        <label>ZNF547</label>
    </interactant>
    <organismsDiffer>false</organismsDiffer>
    <experiments>3</experiments>
</comment>
<comment type="interaction">
    <interactant intactId="EBI-6427977">
        <id>Q96SQ5</id>
    </interactant>
    <interactant intactId="EBI-10251462">
        <id>Q6NX45</id>
        <label>ZNF774</label>
    </interactant>
    <organismsDiffer>false</organismsDiffer>
    <experiments>3</experiments>
</comment>
<comment type="interaction">
    <interactant intactId="EBI-6427977">
        <id>Q96SQ5</id>
    </interactant>
    <interactant intactId="EBI-18036029">
        <id>Q3KNS6-3</id>
        <label>ZNF829</label>
    </interactant>
    <organismsDiffer>false</organismsDiffer>
    <experiments>3</experiments>
</comment>
<comment type="interaction">
    <interactant intactId="EBI-6427977">
        <id>Q96SQ5</id>
    </interactant>
    <interactant intactId="EBI-11962574">
        <id>Q96EG3</id>
        <label>ZNF837</label>
    </interactant>
    <organismsDiffer>false</organismsDiffer>
    <experiments>3</experiments>
</comment>
<comment type="interaction">
    <interactant intactId="EBI-6427977">
        <id>Q96SQ5</id>
    </interactant>
    <interactant intactId="EBI-527853">
        <id>Q9UGI0</id>
        <label>ZRANB1</label>
    </interactant>
    <organismsDiffer>false</organismsDiffer>
    <experiments>3</experiments>
</comment>
<comment type="subcellular location">
    <subcellularLocation>
        <location evidence="4">Nucleus</location>
    </subcellularLocation>
</comment>
<comment type="alternative products">
    <event type="alternative splicing"/>
    <isoform>
        <id>Q96SQ5-1</id>
        <name>1</name>
        <sequence type="displayed"/>
    </isoform>
    <isoform>
        <id>Q96SQ5-2</id>
        <name>2</name>
        <sequence type="described" ref="VSP_046842"/>
    </isoform>
</comment>
<comment type="similarity">
    <text evidence="4">Belongs to the krueppel C2H2-type zinc-finger protein family.</text>
</comment>
<accession>Q96SQ5</accession>
<accession>A0AV72</accession>
<accession>G3V0H5</accession>
<accession>Q6ZMK8</accession>
<dbReference type="EMBL" id="AK027616">
    <property type="protein sequence ID" value="BAB55235.1"/>
    <property type="molecule type" value="mRNA"/>
</dbReference>
<dbReference type="EMBL" id="AC010326">
    <property type="status" value="NOT_ANNOTATED_CDS"/>
    <property type="molecule type" value="Genomic_DNA"/>
</dbReference>
<dbReference type="EMBL" id="AC010522">
    <property type="status" value="NOT_ANNOTATED_CDS"/>
    <property type="molecule type" value="Genomic_DNA"/>
</dbReference>
<dbReference type="EMBL" id="CH471135">
    <property type="protein sequence ID" value="EAW72537.1"/>
    <property type="molecule type" value="Genomic_DNA"/>
</dbReference>
<dbReference type="EMBL" id="BC126237">
    <property type="protein sequence ID" value="AAI26238.1"/>
    <property type="molecule type" value="mRNA"/>
</dbReference>
<dbReference type="EMBL" id="BC126239">
    <property type="protein sequence ID" value="AAI26240.1"/>
    <property type="molecule type" value="mRNA"/>
</dbReference>
<dbReference type="EMBL" id="AK160374">
    <property type="protein sequence ID" value="BAD18717.1"/>
    <property type="molecule type" value="mRNA"/>
</dbReference>
<dbReference type="CCDS" id="CCDS12964.1">
    <molecule id="Q96SQ5-1"/>
</dbReference>
<dbReference type="CCDS" id="CCDS56110.1">
    <molecule id="Q96SQ5-2"/>
</dbReference>
<dbReference type="RefSeq" id="NP_001191746.1">
    <molecule id="Q96SQ5-2"/>
    <property type="nucleotide sequence ID" value="NM_001204817.2"/>
</dbReference>
<dbReference type="RefSeq" id="NP_116217.1">
    <molecule id="Q96SQ5-1"/>
    <property type="nucleotide sequence ID" value="NM_032828.4"/>
</dbReference>
<dbReference type="SMR" id="Q96SQ5"/>
<dbReference type="BioGRID" id="124351">
    <property type="interactions" value="133"/>
</dbReference>
<dbReference type="FunCoup" id="Q96SQ5">
    <property type="interactions" value="54"/>
</dbReference>
<dbReference type="IntAct" id="Q96SQ5">
    <property type="interactions" value="128"/>
</dbReference>
<dbReference type="STRING" id="9606.ENSP00000345479"/>
<dbReference type="GlyGen" id="Q96SQ5">
    <property type="glycosylation" value="1 site, 1 O-linked glycan (1 site)"/>
</dbReference>
<dbReference type="iPTMnet" id="Q96SQ5"/>
<dbReference type="PhosphoSitePlus" id="Q96SQ5"/>
<dbReference type="BioMuta" id="ZNF587"/>
<dbReference type="DMDM" id="74762694"/>
<dbReference type="jPOST" id="Q96SQ5"/>
<dbReference type="MassIVE" id="Q96SQ5"/>
<dbReference type="PaxDb" id="9606-ENSP00000345479"/>
<dbReference type="PeptideAtlas" id="Q96SQ5"/>
<dbReference type="ProteomicsDB" id="32198"/>
<dbReference type="ProteomicsDB" id="78135">
    <molecule id="Q96SQ5-1"/>
</dbReference>
<dbReference type="Pumba" id="Q96SQ5"/>
<dbReference type="Antibodypedia" id="33305">
    <property type="antibodies" value="57 antibodies from 17 providers"/>
</dbReference>
<dbReference type="DNASU" id="84914"/>
<dbReference type="Ensembl" id="ENST00000339656.8">
    <molecule id="Q96SQ5-1"/>
    <property type="protein sequence ID" value="ENSP00000345479.4"/>
    <property type="gene ID" value="ENSG00000198466.12"/>
</dbReference>
<dbReference type="Ensembl" id="ENST00000423137.1">
    <molecule id="Q96SQ5-2"/>
    <property type="protein sequence ID" value="ENSP00000393865.1"/>
    <property type="gene ID" value="ENSG00000198466.12"/>
</dbReference>
<dbReference type="GeneID" id="84914"/>
<dbReference type="KEGG" id="hsa:84914"/>
<dbReference type="MANE-Select" id="ENST00000339656.8">
    <property type="protein sequence ID" value="ENSP00000345479.4"/>
    <property type="RefSeq nucleotide sequence ID" value="NM_032828.4"/>
    <property type="RefSeq protein sequence ID" value="NP_116217.1"/>
</dbReference>
<dbReference type="UCSC" id="uc002qql.4">
    <molecule id="Q96SQ5-1"/>
    <property type="organism name" value="human"/>
</dbReference>
<dbReference type="AGR" id="HGNC:30955"/>
<dbReference type="CTD" id="84914"/>
<dbReference type="DisGeNET" id="84914"/>
<dbReference type="GeneCards" id="ZNF587"/>
<dbReference type="HGNC" id="HGNC:30955">
    <property type="gene designation" value="ZNF587"/>
</dbReference>
<dbReference type="HPA" id="ENSG00000198466">
    <property type="expression patterns" value="Low tissue specificity"/>
</dbReference>
<dbReference type="neXtProt" id="NX_Q96SQ5"/>
<dbReference type="OpenTargets" id="ENSG00000198466"/>
<dbReference type="PharmGKB" id="PA134940421"/>
<dbReference type="VEuPathDB" id="HostDB:ENSG00000198466"/>
<dbReference type="eggNOG" id="KOG1721">
    <property type="taxonomic scope" value="Eukaryota"/>
</dbReference>
<dbReference type="GeneTree" id="ENSGT00940000164176"/>
<dbReference type="HOGENOM" id="CLU_002678_44_5_1"/>
<dbReference type="InParanoid" id="Q96SQ5"/>
<dbReference type="OMA" id="HTGECKE"/>
<dbReference type="OrthoDB" id="9509693at2759"/>
<dbReference type="PAN-GO" id="Q96SQ5">
    <property type="GO annotations" value="4 GO annotations based on evolutionary models"/>
</dbReference>
<dbReference type="PhylomeDB" id="Q96SQ5"/>
<dbReference type="TreeFam" id="TF339848"/>
<dbReference type="PathwayCommons" id="Q96SQ5"/>
<dbReference type="Reactome" id="R-HSA-212436">
    <property type="pathway name" value="Generic Transcription Pathway"/>
</dbReference>
<dbReference type="SignaLink" id="Q96SQ5"/>
<dbReference type="BioGRID-ORCS" id="84914">
    <property type="hits" value="19 hits in 1070 CRISPR screens"/>
</dbReference>
<dbReference type="ChiTaRS" id="ZNF587">
    <property type="organism name" value="human"/>
</dbReference>
<dbReference type="GenomeRNAi" id="84914"/>
<dbReference type="Pharos" id="Q96SQ5">
    <property type="development level" value="Tbio"/>
</dbReference>
<dbReference type="PRO" id="PR:Q96SQ5"/>
<dbReference type="Proteomes" id="UP000005640">
    <property type="component" value="Chromosome 19"/>
</dbReference>
<dbReference type="RNAct" id="Q96SQ5">
    <property type="molecule type" value="protein"/>
</dbReference>
<dbReference type="Bgee" id="ENSG00000198466">
    <property type="expression patterns" value="Expressed in pylorus and 199 other cell types or tissues"/>
</dbReference>
<dbReference type="GO" id="GO:0005634">
    <property type="term" value="C:nucleus"/>
    <property type="evidence" value="ECO:0000318"/>
    <property type="project" value="GO_Central"/>
</dbReference>
<dbReference type="GO" id="GO:0000981">
    <property type="term" value="F:DNA-binding transcription factor activity, RNA polymerase II-specific"/>
    <property type="evidence" value="ECO:0000318"/>
    <property type="project" value="GO_Central"/>
</dbReference>
<dbReference type="GO" id="GO:0000978">
    <property type="term" value="F:RNA polymerase II cis-regulatory region sequence-specific DNA binding"/>
    <property type="evidence" value="ECO:0000318"/>
    <property type="project" value="GO_Central"/>
</dbReference>
<dbReference type="GO" id="GO:0008270">
    <property type="term" value="F:zinc ion binding"/>
    <property type="evidence" value="ECO:0007669"/>
    <property type="project" value="UniProtKB-KW"/>
</dbReference>
<dbReference type="GO" id="GO:0006357">
    <property type="term" value="P:regulation of transcription by RNA polymerase II"/>
    <property type="evidence" value="ECO:0000318"/>
    <property type="project" value="GO_Central"/>
</dbReference>
<dbReference type="CDD" id="cd07765">
    <property type="entry name" value="KRAB_A-box"/>
    <property type="match status" value="1"/>
</dbReference>
<dbReference type="FunFam" id="3.30.160.60:FF:004101">
    <property type="match status" value="1"/>
</dbReference>
<dbReference type="FunFam" id="3.30.160.60:FF:000823">
    <property type="entry name" value="replication initiator 1 isoform X1"/>
    <property type="match status" value="1"/>
</dbReference>
<dbReference type="FunFam" id="3.30.160.60:FF:002343">
    <property type="entry name" value="Zinc finger protein 33A"/>
    <property type="match status" value="3"/>
</dbReference>
<dbReference type="FunFam" id="3.30.160.60:FF:000690">
    <property type="entry name" value="Zinc finger protein 354C"/>
    <property type="match status" value="1"/>
</dbReference>
<dbReference type="FunFam" id="3.30.160.60:FF:002967">
    <property type="entry name" value="Zinc finger protein 417"/>
    <property type="match status" value="1"/>
</dbReference>
<dbReference type="FunFam" id="3.30.160.60:FF:001270">
    <property type="entry name" value="zinc finger protein 583 isoform X1"/>
    <property type="match status" value="1"/>
</dbReference>
<dbReference type="FunFam" id="3.30.160.60:FF:001437">
    <property type="entry name" value="Zinc finger protein 594"/>
    <property type="match status" value="1"/>
</dbReference>
<dbReference type="FunFam" id="3.30.160.60:FF:000490">
    <property type="entry name" value="Zinc finger protein 605"/>
    <property type="match status" value="1"/>
</dbReference>
<dbReference type="FunFam" id="3.30.160.60:FF:000292">
    <property type="entry name" value="zinc finger protein 619"/>
    <property type="match status" value="1"/>
</dbReference>
<dbReference type="FunFam" id="3.30.160.60:FF:000320">
    <property type="entry name" value="Zinc finger protein 777"/>
    <property type="match status" value="1"/>
</dbReference>
<dbReference type="FunFam" id="3.30.160.60:FF:000642">
    <property type="entry name" value="Zinc finger with KRAB and SCAN domains 2"/>
    <property type="match status" value="1"/>
</dbReference>
<dbReference type="Gene3D" id="6.10.140.140">
    <property type="match status" value="1"/>
</dbReference>
<dbReference type="Gene3D" id="3.30.160.60">
    <property type="entry name" value="Classic Zinc Finger"/>
    <property type="match status" value="13"/>
</dbReference>
<dbReference type="InterPro" id="IPR001909">
    <property type="entry name" value="KRAB"/>
</dbReference>
<dbReference type="InterPro" id="IPR036051">
    <property type="entry name" value="KRAB_dom_sf"/>
</dbReference>
<dbReference type="InterPro" id="IPR036236">
    <property type="entry name" value="Znf_C2H2_sf"/>
</dbReference>
<dbReference type="InterPro" id="IPR013087">
    <property type="entry name" value="Znf_C2H2_type"/>
</dbReference>
<dbReference type="PANTHER" id="PTHR24409">
    <property type="entry name" value="ZINC FINGER PROTEIN 142"/>
    <property type="match status" value="1"/>
</dbReference>
<dbReference type="PANTHER" id="PTHR24409:SF331">
    <property type="entry name" value="ZINC FINGER PROTEIN 322A"/>
    <property type="match status" value="1"/>
</dbReference>
<dbReference type="Pfam" id="PF01352">
    <property type="entry name" value="KRAB"/>
    <property type="match status" value="1"/>
</dbReference>
<dbReference type="Pfam" id="PF00096">
    <property type="entry name" value="zf-C2H2"/>
    <property type="match status" value="12"/>
</dbReference>
<dbReference type="SMART" id="SM00349">
    <property type="entry name" value="KRAB"/>
    <property type="match status" value="1"/>
</dbReference>
<dbReference type="SMART" id="SM00355">
    <property type="entry name" value="ZnF_C2H2"/>
    <property type="match status" value="13"/>
</dbReference>
<dbReference type="SUPFAM" id="SSF57667">
    <property type="entry name" value="beta-beta-alpha zinc fingers"/>
    <property type="match status" value="9"/>
</dbReference>
<dbReference type="SUPFAM" id="SSF109640">
    <property type="entry name" value="KRAB domain (Kruppel-associated box)"/>
    <property type="match status" value="1"/>
</dbReference>
<dbReference type="PROSITE" id="PS50805">
    <property type="entry name" value="KRAB"/>
    <property type="match status" value="1"/>
</dbReference>
<dbReference type="PROSITE" id="PS00028">
    <property type="entry name" value="ZINC_FINGER_C2H2_1"/>
    <property type="match status" value="13"/>
</dbReference>
<dbReference type="PROSITE" id="PS50157">
    <property type="entry name" value="ZINC_FINGER_C2H2_2"/>
    <property type="match status" value="13"/>
</dbReference>
<feature type="chain" id="PRO_0000233987" description="Zinc finger protein 587">
    <location>
        <begin position="1"/>
        <end position="575"/>
    </location>
</feature>
<feature type="domain" description="KRAB" evidence="2">
    <location>
        <begin position="15"/>
        <end position="88"/>
    </location>
</feature>
<feature type="zinc finger region" description="C2H2-type 1" evidence="1">
    <location>
        <begin position="92"/>
        <end position="114"/>
    </location>
</feature>
<feature type="zinc finger region" description="C2H2-type 2" evidence="1">
    <location>
        <begin position="240"/>
        <end position="262"/>
    </location>
</feature>
<feature type="zinc finger region" description="C2H2-type 3" evidence="1">
    <location>
        <begin position="268"/>
        <end position="290"/>
    </location>
</feature>
<feature type="zinc finger region" description="C2H2-type 4" evidence="1">
    <location>
        <begin position="296"/>
        <end position="318"/>
    </location>
</feature>
<feature type="zinc finger region" description="C2H2-type 5" evidence="1">
    <location>
        <begin position="324"/>
        <end position="346"/>
    </location>
</feature>
<feature type="zinc finger region" description="C2H2-type 6" evidence="1">
    <location>
        <begin position="352"/>
        <end position="374"/>
    </location>
</feature>
<feature type="zinc finger region" description="C2H2-type 7" evidence="1">
    <location>
        <begin position="380"/>
        <end position="402"/>
    </location>
</feature>
<feature type="zinc finger region" description="C2H2-type 8" evidence="1">
    <location>
        <begin position="408"/>
        <end position="430"/>
    </location>
</feature>
<feature type="zinc finger region" description="C2H2-type 9" evidence="1">
    <location>
        <begin position="436"/>
        <end position="458"/>
    </location>
</feature>
<feature type="zinc finger region" description="C2H2-type 10" evidence="1">
    <location>
        <begin position="464"/>
        <end position="486"/>
    </location>
</feature>
<feature type="zinc finger region" description="C2H2-type 11" evidence="1">
    <location>
        <begin position="492"/>
        <end position="514"/>
    </location>
</feature>
<feature type="zinc finger region" description="C2H2-type 12" evidence="1">
    <location>
        <begin position="520"/>
        <end position="542"/>
    </location>
</feature>
<feature type="zinc finger region" description="C2H2-type 13" evidence="1">
    <location>
        <begin position="548"/>
        <end position="570"/>
    </location>
</feature>
<feature type="region of interest" description="Disordered" evidence="3">
    <location>
        <begin position="69"/>
        <end position="88"/>
    </location>
</feature>
<feature type="compositionally biased region" description="Polar residues" evidence="3">
    <location>
        <begin position="71"/>
        <end position="81"/>
    </location>
</feature>
<feature type="splice variant" id="VSP_046842" description="In isoform 2." evidence="4">
    <location>
        <position position="11"/>
    </location>
</feature>
<proteinExistence type="evidence at protein level"/>
<evidence type="ECO:0000255" key="1">
    <source>
        <dbReference type="PROSITE-ProRule" id="PRU00042"/>
    </source>
</evidence>
<evidence type="ECO:0000255" key="2">
    <source>
        <dbReference type="PROSITE-ProRule" id="PRU00119"/>
    </source>
</evidence>
<evidence type="ECO:0000256" key="3">
    <source>
        <dbReference type="SAM" id="MobiDB-lite"/>
    </source>
</evidence>
<evidence type="ECO:0000305" key="4"/>
<keyword id="KW-0025">Alternative splicing</keyword>
<keyword id="KW-0238">DNA-binding</keyword>
<keyword id="KW-0479">Metal-binding</keyword>
<keyword id="KW-0539">Nucleus</keyword>
<keyword id="KW-1267">Proteomics identification</keyword>
<keyword id="KW-1185">Reference proteome</keyword>
<keyword id="KW-0677">Repeat</keyword>
<keyword id="KW-0804">Transcription</keyword>
<keyword id="KW-0805">Transcription regulation</keyword>
<keyword id="KW-0862">Zinc</keyword>
<keyword id="KW-0863">Zinc-finger</keyword>
<reference key="1">
    <citation type="journal article" date="2004" name="Nat. Genet.">
        <title>Complete sequencing and characterization of 21,243 full-length human cDNAs.</title>
        <authorList>
            <person name="Ota T."/>
            <person name="Suzuki Y."/>
            <person name="Nishikawa T."/>
            <person name="Otsuki T."/>
            <person name="Sugiyama T."/>
            <person name="Irie R."/>
            <person name="Wakamatsu A."/>
            <person name="Hayashi K."/>
            <person name="Sato H."/>
            <person name="Nagai K."/>
            <person name="Kimura K."/>
            <person name="Makita H."/>
            <person name="Sekine M."/>
            <person name="Obayashi M."/>
            <person name="Nishi T."/>
            <person name="Shibahara T."/>
            <person name="Tanaka T."/>
            <person name="Ishii S."/>
            <person name="Yamamoto J."/>
            <person name="Saito K."/>
            <person name="Kawai Y."/>
            <person name="Isono Y."/>
            <person name="Nakamura Y."/>
            <person name="Nagahari K."/>
            <person name="Murakami K."/>
            <person name="Yasuda T."/>
            <person name="Iwayanagi T."/>
            <person name="Wagatsuma M."/>
            <person name="Shiratori A."/>
            <person name="Sudo H."/>
            <person name="Hosoiri T."/>
            <person name="Kaku Y."/>
            <person name="Kodaira H."/>
            <person name="Kondo H."/>
            <person name="Sugawara M."/>
            <person name="Takahashi M."/>
            <person name="Kanda K."/>
            <person name="Yokoi T."/>
            <person name="Furuya T."/>
            <person name="Kikkawa E."/>
            <person name="Omura Y."/>
            <person name="Abe K."/>
            <person name="Kamihara K."/>
            <person name="Katsuta N."/>
            <person name="Sato K."/>
            <person name="Tanikawa M."/>
            <person name="Yamazaki M."/>
            <person name="Ninomiya K."/>
            <person name="Ishibashi T."/>
            <person name="Yamashita H."/>
            <person name="Murakawa K."/>
            <person name="Fujimori K."/>
            <person name="Tanai H."/>
            <person name="Kimata M."/>
            <person name="Watanabe M."/>
            <person name="Hiraoka S."/>
            <person name="Chiba Y."/>
            <person name="Ishida S."/>
            <person name="Ono Y."/>
            <person name="Takiguchi S."/>
            <person name="Watanabe S."/>
            <person name="Yosida M."/>
            <person name="Hotuta T."/>
            <person name="Kusano J."/>
            <person name="Kanehori K."/>
            <person name="Takahashi-Fujii A."/>
            <person name="Hara H."/>
            <person name="Tanase T.-O."/>
            <person name="Nomura Y."/>
            <person name="Togiya S."/>
            <person name="Komai F."/>
            <person name="Hara R."/>
            <person name="Takeuchi K."/>
            <person name="Arita M."/>
            <person name="Imose N."/>
            <person name="Musashino K."/>
            <person name="Yuuki H."/>
            <person name="Oshima A."/>
            <person name="Sasaki N."/>
            <person name="Aotsuka S."/>
            <person name="Yoshikawa Y."/>
            <person name="Matsunawa H."/>
            <person name="Ichihara T."/>
            <person name="Shiohata N."/>
            <person name="Sano S."/>
            <person name="Moriya S."/>
            <person name="Momiyama H."/>
            <person name="Satoh N."/>
            <person name="Takami S."/>
            <person name="Terashima Y."/>
            <person name="Suzuki O."/>
            <person name="Nakagawa S."/>
            <person name="Senoh A."/>
            <person name="Mizoguchi H."/>
            <person name="Goto Y."/>
            <person name="Shimizu F."/>
            <person name="Wakebe H."/>
            <person name="Hishigaki H."/>
            <person name="Watanabe T."/>
            <person name="Sugiyama A."/>
            <person name="Takemoto M."/>
            <person name="Kawakami B."/>
            <person name="Yamazaki M."/>
            <person name="Watanabe K."/>
            <person name="Kumagai A."/>
            <person name="Itakura S."/>
            <person name="Fukuzumi Y."/>
            <person name="Fujimori Y."/>
            <person name="Komiyama M."/>
            <person name="Tashiro H."/>
            <person name="Tanigami A."/>
            <person name="Fujiwara T."/>
            <person name="Ono T."/>
            <person name="Yamada K."/>
            <person name="Fujii Y."/>
            <person name="Ozaki K."/>
            <person name="Hirao M."/>
            <person name="Ohmori Y."/>
            <person name="Kawabata A."/>
            <person name="Hikiji T."/>
            <person name="Kobatake N."/>
            <person name="Inagaki H."/>
            <person name="Ikema Y."/>
            <person name="Okamoto S."/>
            <person name="Okitani R."/>
            <person name="Kawakami T."/>
            <person name="Noguchi S."/>
            <person name="Itoh T."/>
            <person name="Shigeta K."/>
            <person name="Senba T."/>
            <person name="Matsumura K."/>
            <person name="Nakajima Y."/>
            <person name="Mizuno T."/>
            <person name="Morinaga M."/>
            <person name="Sasaki M."/>
            <person name="Togashi T."/>
            <person name="Oyama M."/>
            <person name="Hata H."/>
            <person name="Watanabe M."/>
            <person name="Komatsu T."/>
            <person name="Mizushima-Sugano J."/>
            <person name="Satoh T."/>
            <person name="Shirai Y."/>
            <person name="Takahashi Y."/>
            <person name="Nakagawa K."/>
            <person name="Okumura K."/>
            <person name="Nagase T."/>
            <person name="Nomura N."/>
            <person name="Kikuchi H."/>
            <person name="Masuho Y."/>
            <person name="Yamashita R."/>
            <person name="Nakai K."/>
            <person name="Yada T."/>
            <person name="Nakamura Y."/>
            <person name="Ohara O."/>
            <person name="Isogai T."/>
            <person name="Sugano S."/>
        </authorList>
    </citation>
    <scope>NUCLEOTIDE SEQUENCE [LARGE SCALE MRNA]</scope>
    <source>
        <tissue>Teratocarcinoma</tissue>
    </source>
</reference>
<reference key="2">
    <citation type="journal article" date="2004" name="Nature">
        <title>The DNA sequence and biology of human chromosome 19.</title>
        <authorList>
            <person name="Grimwood J."/>
            <person name="Gordon L.A."/>
            <person name="Olsen A.S."/>
            <person name="Terry A."/>
            <person name="Schmutz J."/>
            <person name="Lamerdin J.E."/>
            <person name="Hellsten U."/>
            <person name="Goodstein D."/>
            <person name="Couronne O."/>
            <person name="Tran-Gyamfi M."/>
            <person name="Aerts A."/>
            <person name="Altherr M."/>
            <person name="Ashworth L."/>
            <person name="Bajorek E."/>
            <person name="Black S."/>
            <person name="Branscomb E."/>
            <person name="Caenepeel S."/>
            <person name="Carrano A.V."/>
            <person name="Caoile C."/>
            <person name="Chan Y.M."/>
            <person name="Christensen M."/>
            <person name="Cleland C.A."/>
            <person name="Copeland A."/>
            <person name="Dalin E."/>
            <person name="Dehal P."/>
            <person name="Denys M."/>
            <person name="Detter J.C."/>
            <person name="Escobar J."/>
            <person name="Flowers D."/>
            <person name="Fotopulos D."/>
            <person name="Garcia C."/>
            <person name="Georgescu A.M."/>
            <person name="Glavina T."/>
            <person name="Gomez M."/>
            <person name="Gonzales E."/>
            <person name="Groza M."/>
            <person name="Hammon N."/>
            <person name="Hawkins T."/>
            <person name="Haydu L."/>
            <person name="Ho I."/>
            <person name="Huang W."/>
            <person name="Israni S."/>
            <person name="Jett J."/>
            <person name="Kadner K."/>
            <person name="Kimball H."/>
            <person name="Kobayashi A."/>
            <person name="Larionov V."/>
            <person name="Leem S.-H."/>
            <person name="Lopez F."/>
            <person name="Lou Y."/>
            <person name="Lowry S."/>
            <person name="Malfatti S."/>
            <person name="Martinez D."/>
            <person name="McCready P.M."/>
            <person name="Medina C."/>
            <person name="Morgan J."/>
            <person name="Nelson K."/>
            <person name="Nolan M."/>
            <person name="Ovcharenko I."/>
            <person name="Pitluck S."/>
            <person name="Pollard M."/>
            <person name="Popkie A.P."/>
            <person name="Predki P."/>
            <person name="Quan G."/>
            <person name="Ramirez L."/>
            <person name="Rash S."/>
            <person name="Retterer J."/>
            <person name="Rodriguez A."/>
            <person name="Rogers S."/>
            <person name="Salamov A."/>
            <person name="Salazar A."/>
            <person name="She X."/>
            <person name="Smith D."/>
            <person name="Slezak T."/>
            <person name="Solovyev V."/>
            <person name="Thayer N."/>
            <person name="Tice H."/>
            <person name="Tsai M."/>
            <person name="Ustaszewska A."/>
            <person name="Vo N."/>
            <person name="Wagner M."/>
            <person name="Wheeler J."/>
            <person name="Wu K."/>
            <person name="Xie G."/>
            <person name="Yang J."/>
            <person name="Dubchak I."/>
            <person name="Furey T.S."/>
            <person name="DeJong P."/>
            <person name="Dickson M."/>
            <person name="Gordon D."/>
            <person name="Eichler E.E."/>
            <person name="Pennacchio L.A."/>
            <person name="Richardson P."/>
            <person name="Stubbs L."/>
            <person name="Rokhsar D.S."/>
            <person name="Myers R.M."/>
            <person name="Rubin E.M."/>
            <person name="Lucas S.M."/>
        </authorList>
    </citation>
    <scope>NUCLEOTIDE SEQUENCE [LARGE SCALE GENOMIC DNA]</scope>
</reference>
<reference key="3">
    <citation type="submission" date="2005-07" db="EMBL/GenBank/DDBJ databases">
        <authorList>
            <person name="Mural R.J."/>
            <person name="Istrail S."/>
            <person name="Sutton G.G."/>
            <person name="Florea L."/>
            <person name="Halpern A.L."/>
            <person name="Mobarry C.M."/>
            <person name="Lippert R."/>
            <person name="Walenz B."/>
            <person name="Shatkay H."/>
            <person name="Dew I."/>
            <person name="Miller J.R."/>
            <person name="Flanigan M.J."/>
            <person name="Edwards N.J."/>
            <person name="Bolanos R."/>
            <person name="Fasulo D."/>
            <person name="Halldorsson B.V."/>
            <person name="Hannenhalli S."/>
            <person name="Turner R."/>
            <person name="Yooseph S."/>
            <person name="Lu F."/>
            <person name="Nusskern D.R."/>
            <person name="Shue B.C."/>
            <person name="Zheng X.H."/>
            <person name="Zhong F."/>
            <person name="Delcher A.L."/>
            <person name="Huson D.H."/>
            <person name="Kravitz S.A."/>
            <person name="Mouchard L."/>
            <person name="Reinert K."/>
            <person name="Remington K.A."/>
            <person name="Clark A.G."/>
            <person name="Waterman M.S."/>
            <person name="Eichler E.E."/>
            <person name="Adams M.D."/>
            <person name="Hunkapiller M.W."/>
            <person name="Myers E.W."/>
            <person name="Venter J.C."/>
        </authorList>
    </citation>
    <scope>NUCLEOTIDE SEQUENCE [LARGE SCALE GENOMIC DNA]</scope>
</reference>
<reference key="4">
    <citation type="journal article" date="2004" name="Genome Res.">
        <title>The status, quality, and expansion of the NIH full-length cDNA project: the Mammalian Gene Collection (MGC).</title>
        <authorList>
            <consortium name="The MGC Project Team"/>
        </authorList>
    </citation>
    <scope>NUCLEOTIDE SEQUENCE [LARGE SCALE MRNA]</scope>
    <source>
        <tissue>Brain</tissue>
    </source>
</reference>
<reference key="5">
    <citation type="submission" date="2004-04" db="EMBL/GenBank/DDBJ databases">
        <title>The nucleotide sequence of a long cDNA clone isolated from human spleen.</title>
        <authorList>
            <person name="Jikuya H."/>
            <person name="Takano J."/>
            <person name="Nomura N."/>
            <person name="Kikuno R."/>
            <person name="Nagase T."/>
            <person name="Ohara O."/>
        </authorList>
    </citation>
    <scope>NUCLEOTIDE SEQUENCE [LARGE SCALE MRNA] OF 12-575</scope>
    <source>
        <tissue>Spleen</tissue>
    </source>
</reference>